<sequence length="336" mass="37062">MSRVTLSRYLIEQTRSNNTPADLRFLIEVVARACKEISHAVSKGALGGVLGSMGTENVQGEVQKKLDVISNEILLEANEWGGHLAGMASEEMDNAYQIPGKYPKGAYLLVFDPLDGSSNIDINAPVGTIFSVLRCPNEYLSQNEALNEKAFLQPGTEQVAAGYAIYGPQTMLVLTLGDGVKGFTLDREMGSFVLTHEDITIPESTQEFAVNMSNQRHWEAPVQRYVSELLAGEDGPLKKNYNMRWVAAMVADVHRILTRGGLFMYPRDSREPSKPGKLRLMYEANPMSFLVEQAGGASTDGHQRILDIQPEGLHQRVAVYLGSKEEVERATAYHKA</sequence>
<evidence type="ECO:0000255" key="1">
    <source>
        <dbReference type="HAMAP-Rule" id="MF_01855"/>
    </source>
</evidence>
<organism>
    <name type="scientific">Pseudomonas syringae pv. syringae (strain B728a)</name>
    <dbReference type="NCBI Taxonomy" id="205918"/>
    <lineage>
        <taxon>Bacteria</taxon>
        <taxon>Pseudomonadati</taxon>
        <taxon>Pseudomonadota</taxon>
        <taxon>Gammaproteobacteria</taxon>
        <taxon>Pseudomonadales</taxon>
        <taxon>Pseudomonadaceae</taxon>
        <taxon>Pseudomonas</taxon>
        <taxon>Pseudomonas syringae</taxon>
    </lineage>
</organism>
<feature type="chain" id="PRO_0000364654" description="Fructose-1,6-bisphosphatase class 1">
    <location>
        <begin position="1"/>
        <end position="336"/>
    </location>
</feature>
<feature type="binding site" evidence="1">
    <location>
        <position position="90"/>
    </location>
    <ligand>
        <name>Mg(2+)</name>
        <dbReference type="ChEBI" id="CHEBI:18420"/>
        <label>1</label>
    </ligand>
</feature>
<feature type="binding site" evidence="1">
    <location>
        <position position="112"/>
    </location>
    <ligand>
        <name>Mg(2+)</name>
        <dbReference type="ChEBI" id="CHEBI:18420"/>
        <label>1</label>
    </ligand>
</feature>
<feature type="binding site" evidence="1">
    <location>
        <position position="112"/>
    </location>
    <ligand>
        <name>Mg(2+)</name>
        <dbReference type="ChEBI" id="CHEBI:18420"/>
        <label>2</label>
    </ligand>
</feature>
<feature type="binding site" evidence="1">
    <location>
        <position position="114"/>
    </location>
    <ligand>
        <name>Mg(2+)</name>
        <dbReference type="ChEBI" id="CHEBI:18420"/>
        <label>1</label>
    </ligand>
</feature>
<feature type="binding site" evidence="1">
    <location>
        <begin position="115"/>
        <end position="118"/>
    </location>
    <ligand>
        <name>substrate</name>
    </ligand>
</feature>
<feature type="binding site" evidence="1">
    <location>
        <position position="115"/>
    </location>
    <ligand>
        <name>Mg(2+)</name>
        <dbReference type="ChEBI" id="CHEBI:18420"/>
        <label>2</label>
    </ligand>
</feature>
<feature type="binding site" evidence="1">
    <location>
        <position position="211"/>
    </location>
    <ligand>
        <name>substrate</name>
    </ligand>
</feature>
<feature type="binding site" evidence="1">
    <location>
        <position position="277"/>
    </location>
    <ligand>
        <name>substrate</name>
    </ligand>
</feature>
<feature type="binding site" evidence="1">
    <location>
        <position position="283"/>
    </location>
    <ligand>
        <name>Mg(2+)</name>
        <dbReference type="ChEBI" id="CHEBI:18420"/>
        <label>2</label>
    </ligand>
</feature>
<reference key="1">
    <citation type="journal article" date="2005" name="Proc. Natl. Acad. Sci. U.S.A.">
        <title>Comparison of the complete genome sequences of Pseudomonas syringae pv. syringae B728a and pv. tomato DC3000.</title>
        <authorList>
            <person name="Feil H."/>
            <person name="Feil W.S."/>
            <person name="Chain P."/>
            <person name="Larimer F."/>
            <person name="Dibartolo G."/>
            <person name="Copeland A."/>
            <person name="Lykidis A."/>
            <person name="Trong S."/>
            <person name="Nolan M."/>
            <person name="Goltsman E."/>
            <person name="Thiel J."/>
            <person name="Malfatti S."/>
            <person name="Loper J.E."/>
            <person name="Lapidus A."/>
            <person name="Detter J.C."/>
            <person name="Land M."/>
            <person name="Richardson P.M."/>
            <person name="Kyrpides N.C."/>
            <person name="Ivanova N."/>
            <person name="Lindow S.E."/>
        </authorList>
    </citation>
    <scope>NUCLEOTIDE SEQUENCE [LARGE SCALE GENOMIC DNA]</scope>
    <source>
        <strain>B728a</strain>
    </source>
</reference>
<protein>
    <recommendedName>
        <fullName evidence="1">Fructose-1,6-bisphosphatase class 1</fullName>
        <shortName evidence="1">FBPase class 1</shortName>
        <ecNumber evidence="1">3.1.3.11</ecNumber>
    </recommendedName>
    <alternativeName>
        <fullName evidence="1">D-fructose-1,6-bisphosphate 1-phosphohydrolase class 1</fullName>
    </alternativeName>
</protein>
<accession>Q4ZZI0</accession>
<dbReference type="EC" id="3.1.3.11" evidence="1"/>
<dbReference type="EMBL" id="CP000075">
    <property type="protein sequence ID" value="AAY35442.1"/>
    <property type="molecule type" value="Genomic_DNA"/>
</dbReference>
<dbReference type="RefSeq" id="WP_003341445.1">
    <property type="nucleotide sequence ID" value="NC_007005.1"/>
</dbReference>
<dbReference type="RefSeq" id="YP_233480.1">
    <property type="nucleotide sequence ID" value="NC_007005.1"/>
</dbReference>
<dbReference type="SMR" id="Q4ZZI0"/>
<dbReference type="STRING" id="205918.Psyr_0370"/>
<dbReference type="KEGG" id="psb:Psyr_0370"/>
<dbReference type="PATRIC" id="fig|205918.7.peg.377"/>
<dbReference type="eggNOG" id="COG0158">
    <property type="taxonomic scope" value="Bacteria"/>
</dbReference>
<dbReference type="HOGENOM" id="CLU_039977_0_0_6"/>
<dbReference type="OrthoDB" id="9806756at2"/>
<dbReference type="UniPathway" id="UPA00138"/>
<dbReference type="Proteomes" id="UP000000426">
    <property type="component" value="Chromosome"/>
</dbReference>
<dbReference type="GO" id="GO:0005829">
    <property type="term" value="C:cytosol"/>
    <property type="evidence" value="ECO:0007669"/>
    <property type="project" value="TreeGrafter"/>
</dbReference>
<dbReference type="GO" id="GO:0042132">
    <property type="term" value="F:fructose 1,6-bisphosphate 1-phosphatase activity"/>
    <property type="evidence" value="ECO:0007669"/>
    <property type="project" value="UniProtKB-UniRule"/>
</dbReference>
<dbReference type="GO" id="GO:0000287">
    <property type="term" value="F:magnesium ion binding"/>
    <property type="evidence" value="ECO:0007669"/>
    <property type="project" value="UniProtKB-UniRule"/>
</dbReference>
<dbReference type="GO" id="GO:0030388">
    <property type="term" value="P:fructose 1,6-bisphosphate metabolic process"/>
    <property type="evidence" value="ECO:0007669"/>
    <property type="project" value="TreeGrafter"/>
</dbReference>
<dbReference type="GO" id="GO:0006002">
    <property type="term" value="P:fructose 6-phosphate metabolic process"/>
    <property type="evidence" value="ECO:0007669"/>
    <property type="project" value="TreeGrafter"/>
</dbReference>
<dbReference type="GO" id="GO:0006000">
    <property type="term" value="P:fructose metabolic process"/>
    <property type="evidence" value="ECO:0007669"/>
    <property type="project" value="TreeGrafter"/>
</dbReference>
<dbReference type="GO" id="GO:0006094">
    <property type="term" value="P:gluconeogenesis"/>
    <property type="evidence" value="ECO:0007669"/>
    <property type="project" value="UniProtKB-UniRule"/>
</dbReference>
<dbReference type="GO" id="GO:0005986">
    <property type="term" value="P:sucrose biosynthetic process"/>
    <property type="evidence" value="ECO:0007669"/>
    <property type="project" value="TreeGrafter"/>
</dbReference>
<dbReference type="CDD" id="cd00354">
    <property type="entry name" value="FBPase"/>
    <property type="match status" value="1"/>
</dbReference>
<dbReference type="FunFam" id="3.30.540.10:FF:000006">
    <property type="entry name" value="Fructose-1,6-bisphosphatase class 1"/>
    <property type="match status" value="1"/>
</dbReference>
<dbReference type="FunFam" id="3.40.190.80:FF:000011">
    <property type="entry name" value="Fructose-1,6-bisphosphatase class 1"/>
    <property type="match status" value="1"/>
</dbReference>
<dbReference type="Gene3D" id="3.40.190.80">
    <property type="match status" value="1"/>
</dbReference>
<dbReference type="Gene3D" id="3.30.540.10">
    <property type="entry name" value="Fructose-1,6-Bisphosphatase, subunit A, domain 1"/>
    <property type="match status" value="1"/>
</dbReference>
<dbReference type="HAMAP" id="MF_01855">
    <property type="entry name" value="FBPase_class1"/>
    <property type="match status" value="1"/>
</dbReference>
<dbReference type="InterPro" id="IPR044015">
    <property type="entry name" value="FBPase_C_dom"/>
</dbReference>
<dbReference type="InterPro" id="IPR000146">
    <property type="entry name" value="FBPase_class-1"/>
</dbReference>
<dbReference type="InterPro" id="IPR033391">
    <property type="entry name" value="FBPase_N"/>
</dbReference>
<dbReference type="InterPro" id="IPR028343">
    <property type="entry name" value="FBPtase"/>
</dbReference>
<dbReference type="NCBIfam" id="NF006778">
    <property type="entry name" value="PRK09293.1-1"/>
    <property type="match status" value="1"/>
</dbReference>
<dbReference type="NCBIfam" id="NF006779">
    <property type="entry name" value="PRK09293.1-3"/>
    <property type="match status" value="1"/>
</dbReference>
<dbReference type="NCBIfam" id="NF006780">
    <property type="entry name" value="PRK09293.1-4"/>
    <property type="match status" value="1"/>
</dbReference>
<dbReference type="PANTHER" id="PTHR11556">
    <property type="entry name" value="FRUCTOSE-1,6-BISPHOSPHATASE-RELATED"/>
    <property type="match status" value="1"/>
</dbReference>
<dbReference type="PANTHER" id="PTHR11556:SF35">
    <property type="entry name" value="SEDOHEPTULOSE-1,7-BISPHOSPHATASE, CHLOROPLASTIC"/>
    <property type="match status" value="1"/>
</dbReference>
<dbReference type="Pfam" id="PF00316">
    <property type="entry name" value="FBPase"/>
    <property type="match status" value="1"/>
</dbReference>
<dbReference type="Pfam" id="PF18913">
    <property type="entry name" value="FBPase_C"/>
    <property type="match status" value="1"/>
</dbReference>
<dbReference type="PIRSF" id="PIRSF500210">
    <property type="entry name" value="FBPtase"/>
    <property type="match status" value="1"/>
</dbReference>
<dbReference type="PIRSF" id="PIRSF000904">
    <property type="entry name" value="FBPtase_SBPase"/>
    <property type="match status" value="1"/>
</dbReference>
<dbReference type="PRINTS" id="PR00115">
    <property type="entry name" value="F16BPHPHTASE"/>
</dbReference>
<dbReference type="SUPFAM" id="SSF56655">
    <property type="entry name" value="Carbohydrate phosphatase"/>
    <property type="match status" value="1"/>
</dbReference>
<name>F16PA_PSEU2</name>
<keyword id="KW-0119">Carbohydrate metabolism</keyword>
<keyword id="KW-0963">Cytoplasm</keyword>
<keyword id="KW-0378">Hydrolase</keyword>
<keyword id="KW-0460">Magnesium</keyword>
<keyword id="KW-0479">Metal-binding</keyword>
<gene>
    <name evidence="1" type="primary">fbp</name>
    <name type="ordered locus">Psyr_0370</name>
</gene>
<comment type="catalytic activity">
    <reaction evidence="1">
        <text>beta-D-fructose 1,6-bisphosphate + H2O = beta-D-fructose 6-phosphate + phosphate</text>
        <dbReference type="Rhea" id="RHEA:11064"/>
        <dbReference type="ChEBI" id="CHEBI:15377"/>
        <dbReference type="ChEBI" id="CHEBI:32966"/>
        <dbReference type="ChEBI" id="CHEBI:43474"/>
        <dbReference type="ChEBI" id="CHEBI:57634"/>
        <dbReference type="EC" id="3.1.3.11"/>
    </reaction>
</comment>
<comment type="cofactor">
    <cofactor evidence="1">
        <name>Mg(2+)</name>
        <dbReference type="ChEBI" id="CHEBI:18420"/>
    </cofactor>
    <text evidence="1">Binds 2 magnesium ions per subunit.</text>
</comment>
<comment type="pathway">
    <text evidence="1">Carbohydrate biosynthesis; gluconeogenesis.</text>
</comment>
<comment type="subunit">
    <text evidence="1">Homotetramer.</text>
</comment>
<comment type="subcellular location">
    <subcellularLocation>
        <location evidence="1">Cytoplasm</location>
    </subcellularLocation>
</comment>
<comment type="similarity">
    <text evidence="1">Belongs to the FBPase class 1 family.</text>
</comment>
<proteinExistence type="inferred from homology"/>